<organism>
    <name type="scientific">Homo sapiens</name>
    <name type="common">Human</name>
    <dbReference type="NCBI Taxonomy" id="9606"/>
    <lineage>
        <taxon>Eukaryota</taxon>
        <taxon>Metazoa</taxon>
        <taxon>Chordata</taxon>
        <taxon>Craniata</taxon>
        <taxon>Vertebrata</taxon>
        <taxon>Euteleostomi</taxon>
        <taxon>Mammalia</taxon>
        <taxon>Eutheria</taxon>
        <taxon>Euarchontoglires</taxon>
        <taxon>Primates</taxon>
        <taxon>Haplorrhini</taxon>
        <taxon>Catarrhini</taxon>
        <taxon>Hominidae</taxon>
        <taxon>Homo</taxon>
    </lineage>
</organism>
<proteinExistence type="evidence at protein level"/>
<dbReference type="EMBL" id="X55039">
    <property type="protein sequence ID" value="CAA38879.1"/>
    <property type="molecule type" value="Genomic_DNA"/>
</dbReference>
<dbReference type="EMBL" id="AL109804">
    <property type="status" value="NOT_ANNOTATED_CDS"/>
    <property type="molecule type" value="Genomic_DNA"/>
</dbReference>
<dbReference type="EMBL" id="BC012297">
    <property type="protein sequence ID" value="AAH12297.1"/>
    <property type="molecule type" value="mRNA"/>
</dbReference>
<dbReference type="EMBL" id="BC053847">
    <property type="protein sequence ID" value="AAH53847.1"/>
    <property type="molecule type" value="mRNA"/>
</dbReference>
<dbReference type="EMBL" id="X05299">
    <property type="protein sequence ID" value="CAA28918.1"/>
    <property type="molecule type" value="mRNA"/>
</dbReference>
<dbReference type="CCDS" id="CCDS13064.1"/>
<dbReference type="PIR" id="S18735">
    <property type="entry name" value="S18735"/>
</dbReference>
<dbReference type="RefSeq" id="NP_001801.1">
    <property type="nucleotide sequence ID" value="NM_001810.6"/>
</dbReference>
<dbReference type="PDB" id="1BW6">
    <property type="method" value="NMR"/>
    <property type="chains" value="A=1-56"/>
</dbReference>
<dbReference type="PDB" id="1HLV">
    <property type="method" value="X-ray"/>
    <property type="resolution" value="2.50 A"/>
    <property type="chains" value="A=1-129"/>
</dbReference>
<dbReference type="PDB" id="1UFI">
    <property type="method" value="X-ray"/>
    <property type="resolution" value="1.65 A"/>
    <property type="chains" value="A/B/C/D=540-599"/>
</dbReference>
<dbReference type="PDB" id="6KDR">
    <property type="method" value="X-ray"/>
    <property type="resolution" value="2.11 A"/>
    <property type="chains" value="D/E=2-10"/>
</dbReference>
<dbReference type="PDBsum" id="1BW6"/>
<dbReference type="PDBsum" id="1HLV"/>
<dbReference type="PDBsum" id="1UFI"/>
<dbReference type="PDBsum" id="6KDR"/>
<dbReference type="SMR" id="P07199"/>
<dbReference type="BioGRID" id="107488">
    <property type="interactions" value="126"/>
</dbReference>
<dbReference type="CORUM" id="P07199"/>
<dbReference type="FunCoup" id="P07199">
    <property type="interactions" value="865"/>
</dbReference>
<dbReference type="IntAct" id="P07199">
    <property type="interactions" value="105"/>
</dbReference>
<dbReference type="MINT" id="P07199"/>
<dbReference type="STRING" id="9606.ENSP00000369075"/>
<dbReference type="iPTMnet" id="P07199"/>
<dbReference type="PhosphoSitePlus" id="P07199"/>
<dbReference type="SwissPalm" id="P07199"/>
<dbReference type="BioMuta" id="CENPB"/>
<dbReference type="DMDM" id="116109"/>
<dbReference type="jPOST" id="P07199"/>
<dbReference type="MassIVE" id="P07199"/>
<dbReference type="PaxDb" id="9606-ENSP00000369075"/>
<dbReference type="PeptideAtlas" id="P07199"/>
<dbReference type="ProteomicsDB" id="51963"/>
<dbReference type="ProteomicsDB" id="76410"/>
<dbReference type="Pumba" id="P07199"/>
<dbReference type="Antibodypedia" id="23700">
    <property type="antibodies" value="144 antibodies from 23 providers"/>
</dbReference>
<dbReference type="DNASU" id="1059"/>
<dbReference type="Ensembl" id="ENST00000379751.5">
    <property type="protein sequence ID" value="ENSP00000369075.4"/>
    <property type="gene ID" value="ENSG00000125817.8"/>
</dbReference>
<dbReference type="GeneID" id="1059"/>
<dbReference type="KEGG" id="hsa:1059"/>
<dbReference type="MANE-Select" id="ENST00000379751.5">
    <property type="protein sequence ID" value="ENSP00000369075.4"/>
    <property type="RefSeq nucleotide sequence ID" value="NM_001810.6"/>
    <property type="RefSeq protein sequence ID" value="NP_001801.1"/>
</dbReference>
<dbReference type="UCSC" id="uc002wjk.3">
    <property type="organism name" value="human"/>
</dbReference>
<dbReference type="AGR" id="HGNC:1852"/>
<dbReference type="CTD" id="1059"/>
<dbReference type="DisGeNET" id="1059"/>
<dbReference type="GeneCards" id="CENPB"/>
<dbReference type="HGNC" id="HGNC:1852">
    <property type="gene designation" value="CENPB"/>
</dbReference>
<dbReference type="HPA" id="ENSG00000125817">
    <property type="expression patterns" value="Tissue enhanced (brain)"/>
</dbReference>
<dbReference type="MIM" id="117140">
    <property type="type" value="gene"/>
</dbReference>
<dbReference type="neXtProt" id="NX_P07199"/>
<dbReference type="OpenTargets" id="ENSG00000125817"/>
<dbReference type="PharmGKB" id="PA26397"/>
<dbReference type="VEuPathDB" id="HostDB:ENSG00000125817"/>
<dbReference type="eggNOG" id="KOG3105">
    <property type="taxonomic scope" value="Eukaryota"/>
</dbReference>
<dbReference type="GeneTree" id="ENSGT00940000162810"/>
<dbReference type="HOGENOM" id="CLU_018294_10_0_1"/>
<dbReference type="InParanoid" id="P07199"/>
<dbReference type="OMA" id="IETSLWY"/>
<dbReference type="OrthoDB" id="125347at2759"/>
<dbReference type="PAN-GO" id="P07199">
    <property type="GO annotations" value="2 GO annotations based on evolutionary models"/>
</dbReference>
<dbReference type="PhylomeDB" id="P07199"/>
<dbReference type="TreeFam" id="TF101131"/>
<dbReference type="PathwayCommons" id="P07199"/>
<dbReference type="SignaLink" id="P07199"/>
<dbReference type="BioGRID-ORCS" id="1059">
    <property type="hits" value="26 hits in 1159 CRISPR screens"/>
</dbReference>
<dbReference type="CD-CODE" id="91857CE7">
    <property type="entry name" value="Nucleolus"/>
</dbReference>
<dbReference type="CD-CODE" id="DEE660B4">
    <property type="entry name" value="Stress granule"/>
</dbReference>
<dbReference type="ChiTaRS" id="CENPB">
    <property type="organism name" value="human"/>
</dbReference>
<dbReference type="EvolutionaryTrace" id="P07199"/>
<dbReference type="GeneWiki" id="Centromere_protein_B"/>
<dbReference type="GenomeRNAi" id="1059"/>
<dbReference type="Pharos" id="P07199">
    <property type="development level" value="Tbio"/>
</dbReference>
<dbReference type="PRO" id="PR:P07199"/>
<dbReference type="Proteomes" id="UP000005640">
    <property type="component" value="Chromosome 20"/>
</dbReference>
<dbReference type="RNAct" id="P07199">
    <property type="molecule type" value="protein"/>
</dbReference>
<dbReference type="Bgee" id="ENSG00000125817">
    <property type="expression patterns" value="Expressed in C1 segment of cervical spinal cord and 183 other cell types or tissues"/>
</dbReference>
<dbReference type="GO" id="GO:0005694">
    <property type="term" value="C:chromosome"/>
    <property type="evidence" value="ECO:0000314"/>
    <property type="project" value="UniProtKB"/>
</dbReference>
<dbReference type="GO" id="GO:0000775">
    <property type="term" value="C:chromosome, centromeric region"/>
    <property type="evidence" value="ECO:0000314"/>
    <property type="project" value="UniProtKB"/>
</dbReference>
<dbReference type="GO" id="GO:0000779">
    <property type="term" value="C:condensed chromosome, centromeric region"/>
    <property type="evidence" value="ECO:0007669"/>
    <property type="project" value="Ensembl"/>
</dbReference>
<dbReference type="GO" id="GO:0016604">
    <property type="term" value="C:nuclear body"/>
    <property type="evidence" value="ECO:0000314"/>
    <property type="project" value="HPA"/>
</dbReference>
<dbReference type="GO" id="GO:0005654">
    <property type="term" value="C:nucleoplasm"/>
    <property type="evidence" value="ECO:0000314"/>
    <property type="project" value="HPA"/>
</dbReference>
<dbReference type="GO" id="GO:0005634">
    <property type="term" value="C:nucleus"/>
    <property type="evidence" value="ECO:0000318"/>
    <property type="project" value="GO_Central"/>
</dbReference>
<dbReference type="GO" id="GO:0005721">
    <property type="term" value="C:pericentric heterochromatin"/>
    <property type="evidence" value="ECO:0007669"/>
    <property type="project" value="Ensembl"/>
</dbReference>
<dbReference type="GO" id="GO:0019237">
    <property type="term" value="F:centromeric DNA binding"/>
    <property type="evidence" value="ECO:0000305"/>
    <property type="project" value="BHF-UCL"/>
</dbReference>
<dbReference type="GO" id="GO:0003682">
    <property type="term" value="F:chromatin binding"/>
    <property type="evidence" value="ECO:0000303"/>
    <property type="project" value="UniProtKB"/>
</dbReference>
<dbReference type="GO" id="GO:0003677">
    <property type="term" value="F:DNA binding"/>
    <property type="evidence" value="ECO:0000318"/>
    <property type="project" value="GO_Central"/>
</dbReference>
<dbReference type="GO" id="GO:0003696">
    <property type="term" value="F:satellite DNA binding"/>
    <property type="evidence" value="ECO:0000303"/>
    <property type="project" value="UniProtKB"/>
</dbReference>
<dbReference type="GO" id="GO:0043565">
    <property type="term" value="F:sequence-specific DNA binding"/>
    <property type="evidence" value="ECO:0000304"/>
    <property type="project" value="BHF-UCL"/>
</dbReference>
<dbReference type="DisProt" id="DP02465"/>
<dbReference type="FunFam" id="1.10.10.60:FF:000313">
    <property type="entry name" value="major centromere autoantigen B"/>
    <property type="match status" value="1"/>
</dbReference>
<dbReference type="FunFam" id="1.10.287.1090:FF:000001">
    <property type="entry name" value="major centromere autoantigen B"/>
    <property type="match status" value="1"/>
</dbReference>
<dbReference type="Gene3D" id="1.10.287.1090">
    <property type="entry name" value="Dimerisation domain of CENP-B"/>
    <property type="match status" value="1"/>
</dbReference>
<dbReference type="Gene3D" id="1.10.10.60">
    <property type="entry name" value="Homeodomain-like"/>
    <property type="match status" value="2"/>
</dbReference>
<dbReference type="InterPro" id="IPR015115">
    <property type="entry name" value="CenpB_C"/>
</dbReference>
<dbReference type="InterPro" id="IPR050863">
    <property type="entry name" value="CenT-Element_Derived"/>
</dbReference>
<dbReference type="InterPro" id="IPR004875">
    <property type="entry name" value="DDE_SF_endonuclease_dom"/>
</dbReference>
<dbReference type="InterPro" id="IPR034882">
    <property type="entry name" value="Dimerisation_CENP-B_sf"/>
</dbReference>
<dbReference type="InterPro" id="IPR009057">
    <property type="entry name" value="Homeodomain-like_sf"/>
</dbReference>
<dbReference type="InterPro" id="IPR006600">
    <property type="entry name" value="HTH_CenpB_DNA-bd_dom"/>
</dbReference>
<dbReference type="InterPro" id="IPR007889">
    <property type="entry name" value="HTH_Psq"/>
</dbReference>
<dbReference type="PANTHER" id="PTHR19303:SF69">
    <property type="entry name" value="MAJOR CENTROMERE AUTOANTIGEN B"/>
    <property type="match status" value="1"/>
</dbReference>
<dbReference type="PANTHER" id="PTHR19303">
    <property type="entry name" value="TRANSPOSON"/>
    <property type="match status" value="1"/>
</dbReference>
<dbReference type="Pfam" id="PF09026">
    <property type="entry name" value="CENP-B_dimeris"/>
    <property type="match status" value="1"/>
</dbReference>
<dbReference type="Pfam" id="PF04218">
    <property type="entry name" value="CENP-B_N"/>
    <property type="match status" value="1"/>
</dbReference>
<dbReference type="Pfam" id="PF03184">
    <property type="entry name" value="DDE_1"/>
    <property type="match status" value="1"/>
</dbReference>
<dbReference type="Pfam" id="PF03221">
    <property type="entry name" value="HTH_Tnp_Tc5"/>
    <property type="match status" value="1"/>
</dbReference>
<dbReference type="SMART" id="SM00674">
    <property type="entry name" value="CENPB"/>
    <property type="match status" value="1"/>
</dbReference>
<dbReference type="SUPFAM" id="SSF101160">
    <property type="entry name" value="Dimerisation domain of CENP-B"/>
    <property type="match status" value="1"/>
</dbReference>
<dbReference type="SUPFAM" id="SSF46689">
    <property type="entry name" value="Homeodomain-like"/>
    <property type="match status" value="2"/>
</dbReference>
<dbReference type="PROSITE" id="PS51253">
    <property type="entry name" value="HTH_CENPB"/>
    <property type="match status" value="1"/>
</dbReference>
<dbReference type="PROSITE" id="PS50960">
    <property type="entry name" value="HTH_PSQ"/>
    <property type="match status" value="1"/>
</dbReference>
<evidence type="ECO:0000250" key="1">
    <source>
        <dbReference type="UniProtKB" id="P27790"/>
    </source>
</evidence>
<evidence type="ECO:0000255" key="2">
    <source>
        <dbReference type="PROSITE-ProRule" id="PRU00320"/>
    </source>
</evidence>
<evidence type="ECO:0000255" key="3">
    <source>
        <dbReference type="PROSITE-ProRule" id="PRU00583"/>
    </source>
</evidence>
<evidence type="ECO:0000256" key="4">
    <source>
        <dbReference type="SAM" id="MobiDB-lite"/>
    </source>
</evidence>
<evidence type="ECO:0000269" key="5">
    <source>
    </source>
</evidence>
<evidence type="ECO:0000269" key="6">
    <source>
    </source>
</evidence>
<evidence type="ECO:0000269" key="7">
    <source>
    </source>
</evidence>
<evidence type="ECO:0000269" key="8">
    <source>
    </source>
</evidence>
<evidence type="ECO:0000269" key="9">
    <source>
    </source>
</evidence>
<evidence type="ECO:0000269" key="10">
    <source>
    </source>
</evidence>
<evidence type="ECO:0000269" key="11">
    <source>
    </source>
</evidence>
<evidence type="ECO:0000269" key="12">
    <source>
    </source>
</evidence>
<evidence type="ECO:0000305" key="13"/>
<evidence type="ECO:0007744" key="14">
    <source>
    </source>
</evidence>
<evidence type="ECO:0007744" key="15">
    <source>
    </source>
</evidence>
<evidence type="ECO:0007744" key="16">
    <source>
    </source>
</evidence>
<evidence type="ECO:0007744" key="17">
    <source>
    </source>
</evidence>
<evidence type="ECO:0007829" key="18">
    <source>
        <dbReference type="PDB" id="1BW6"/>
    </source>
</evidence>
<evidence type="ECO:0007829" key="19">
    <source>
        <dbReference type="PDB" id="1HLV"/>
    </source>
</evidence>
<evidence type="ECO:0007829" key="20">
    <source>
        <dbReference type="PDB" id="1UFI"/>
    </source>
</evidence>
<feature type="initiator methionine" description="Removed" evidence="10">
    <location>
        <position position="1"/>
    </location>
</feature>
<feature type="chain" id="PRO_0000126125" description="Major centromere autoantigen B">
    <location>
        <begin position="2"/>
        <end position="599"/>
    </location>
</feature>
<feature type="domain" description="HTH psq-type" evidence="2">
    <location>
        <begin position="2"/>
        <end position="52"/>
    </location>
</feature>
<feature type="domain" description="HTH CENPB-type" evidence="3">
    <location>
        <begin position="65"/>
        <end position="136"/>
    </location>
</feature>
<feature type="DNA-binding region" description="H-T-H motif">
    <location>
        <begin position="28"/>
        <end position="48"/>
    </location>
</feature>
<feature type="DNA-binding region" description="H-T-H motif">
    <location>
        <begin position="97"/>
        <end position="129"/>
    </location>
</feature>
<feature type="region of interest" description="Disordered" evidence="4">
    <location>
        <begin position="143"/>
        <end position="184"/>
    </location>
</feature>
<feature type="region of interest" description="Disordered" evidence="4">
    <location>
        <begin position="387"/>
        <end position="475"/>
    </location>
</feature>
<feature type="region of interest" description="Disordered" evidence="4">
    <location>
        <begin position="495"/>
        <end position="544"/>
    </location>
</feature>
<feature type="region of interest" description="Homodimerization">
    <location>
        <begin position="536"/>
        <end position="599"/>
    </location>
</feature>
<feature type="compositionally biased region" description="Low complexity" evidence="4">
    <location>
        <begin position="144"/>
        <end position="159"/>
    </location>
</feature>
<feature type="compositionally biased region" description="Acidic residues" evidence="4">
    <location>
        <begin position="405"/>
        <end position="475"/>
    </location>
</feature>
<feature type="compositionally biased region" description="Acidic residues" evidence="4">
    <location>
        <begin position="506"/>
        <end position="538"/>
    </location>
</feature>
<feature type="modified residue" description="N,N,N-trimethylglycine; alternate" evidence="10">
    <location>
        <position position="2"/>
    </location>
</feature>
<feature type="modified residue" description="N,N-dimethylglycine; alternate" evidence="10">
    <location>
        <position position="2"/>
    </location>
</feature>
<feature type="modified residue" description="N-methylglycine; alternate" evidence="10">
    <location>
        <position position="2"/>
    </location>
</feature>
<feature type="modified residue" description="Phosphoserine" evidence="14 15 16">
    <location>
        <position position="156"/>
    </location>
</feature>
<feature type="modified residue" description="Phosphoserine" evidence="15">
    <location>
        <position position="165"/>
    </location>
</feature>
<feature type="modified residue" description="Phosphothreonine" evidence="16">
    <location>
        <position position="396"/>
    </location>
</feature>
<feature type="modified residue" description="Phosphothreonine" evidence="15">
    <location>
        <position position="398"/>
    </location>
</feature>
<feature type="cross-link" description="Glycyl lysine isopeptide (Lys-Gly) (interchain with G-Cter in SUMO2)" evidence="17">
    <location>
        <position position="246"/>
    </location>
</feature>
<feature type="mutagenesis site" description="Abolishes N-terminal methylation." evidence="10">
    <original>K</original>
    <variation>Q</variation>
    <location>
        <position position="4"/>
    </location>
</feature>
<feature type="sequence conflict" description="In Ref. 4; CAA28918." evidence="13" ref="4">
    <original>R</original>
    <variation>M</variation>
    <location>
        <position position="583"/>
    </location>
</feature>
<feature type="sequence conflict" description="In Ref. 4; CAA28918." evidence="13" ref="4">
    <original>VR</original>
    <variation>LL</variation>
    <location>
        <begin position="592"/>
        <end position="593"/>
    </location>
</feature>
<feature type="strand" evidence="18">
    <location>
        <begin position="4"/>
        <end position="6"/>
    </location>
</feature>
<feature type="helix" evidence="19">
    <location>
        <begin position="10"/>
        <end position="22"/>
    </location>
</feature>
<feature type="strand" evidence="18">
    <location>
        <begin position="24"/>
        <end position="26"/>
    </location>
</feature>
<feature type="helix" evidence="19">
    <location>
        <begin position="28"/>
        <end position="35"/>
    </location>
</feature>
<feature type="helix" evidence="19">
    <location>
        <begin position="39"/>
        <end position="47"/>
    </location>
</feature>
<feature type="helix" evidence="19">
    <location>
        <begin position="49"/>
        <end position="59"/>
    </location>
</feature>
<feature type="helix" evidence="19">
    <location>
        <begin position="60"/>
        <end position="64"/>
    </location>
</feature>
<feature type="helix" evidence="19">
    <location>
        <begin position="75"/>
        <end position="88"/>
    </location>
</feature>
<feature type="helix" evidence="19">
    <location>
        <begin position="89"/>
        <end position="91"/>
    </location>
</feature>
<feature type="helix" evidence="19">
    <location>
        <begin position="97"/>
        <end position="111"/>
    </location>
</feature>
<feature type="helix" evidence="19">
    <location>
        <begin position="120"/>
        <end position="129"/>
    </location>
</feature>
<feature type="helix" evidence="20">
    <location>
        <begin position="544"/>
        <end position="558"/>
    </location>
</feature>
<feature type="helix" evidence="20">
    <location>
        <begin position="565"/>
        <end position="584"/>
    </location>
</feature>
<reference key="1">
    <citation type="journal article" date="1991" name="Chromosoma">
        <title>CENP-B is a highly conserved mammalian centromere protein with homology to the helix-loop-helix family of proteins.</title>
        <authorList>
            <person name="Sullivan K.F."/>
            <person name="Glass C.A."/>
        </authorList>
    </citation>
    <scope>NUCLEOTIDE SEQUENCE [GENOMIC DNA]</scope>
</reference>
<reference key="2">
    <citation type="journal article" date="2001" name="Nature">
        <title>The DNA sequence and comparative analysis of human chromosome 20.</title>
        <authorList>
            <person name="Deloukas P."/>
            <person name="Matthews L.H."/>
            <person name="Ashurst J.L."/>
            <person name="Burton J."/>
            <person name="Gilbert J.G.R."/>
            <person name="Jones M."/>
            <person name="Stavrides G."/>
            <person name="Almeida J.P."/>
            <person name="Babbage A.K."/>
            <person name="Bagguley C.L."/>
            <person name="Bailey J."/>
            <person name="Barlow K.F."/>
            <person name="Bates K.N."/>
            <person name="Beard L.M."/>
            <person name="Beare D.M."/>
            <person name="Beasley O.P."/>
            <person name="Bird C.P."/>
            <person name="Blakey S.E."/>
            <person name="Bridgeman A.M."/>
            <person name="Brown A.J."/>
            <person name="Buck D."/>
            <person name="Burrill W.D."/>
            <person name="Butler A.P."/>
            <person name="Carder C."/>
            <person name="Carter N.P."/>
            <person name="Chapman J.C."/>
            <person name="Clamp M."/>
            <person name="Clark G."/>
            <person name="Clark L.N."/>
            <person name="Clark S.Y."/>
            <person name="Clee C.M."/>
            <person name="Clegg S."/>
            <person name="Cobley V.E."/>
            <person name="Collier R.E."/>
            <person name="Connor R.E."/>
            <person name="Corby N.R."/>
            <person name="Coulson A."/>
            <person name="Coville G.J."/>
            <person name="Deadman R."/>
            <person name="Dhami P.D."/>
            <person name="Dunn M."/>
            <person name="Ellington A.G."/>
            <person name="Frankland J.A."/>
            <person name="Fraser A."/>
            <person name="French L."/>
            <person name="Garner P."/>
            <person name="Grafham D.V."/>
            <person name="Griffiths C."/>
            <person name="Griffiths M.N.D."/>
            <person name="Gwilliam R."/>
            <person name="Hall R.E."/>
            <person name="Hammond S."/>
            <person name="Harley J.L."/>
            <person name="Heath P.D."/>
            <person name="Ho S."/>
            <person name="Holden J.L."/>
            <person name="Howden P.J."/>
            <person name="Huckle E."/>
            <person name="Hunt A.R."/>
            <person name="Hunt S.E."/>
            <person name="Jekosch K."/>
            <person name="Johnson C.M."/>
            <person name="Johnson D."/>
            <person name="Kay M.P."/>
            <person name="Kimberley A.M."/>
            <person name="King A."/>
            <person name="Knights A."/>
            <person name="Laird G.K."/>
            <person name="Lawlor S."/>
            <person name="Lehvaeslaiho M.H."/>
            <person name="Leversha M.A."/>
            <person name="Lloyd C."/>
            <person name="Lloyd D.M."/>
            <person name="Lovell J.D."/>
            <person name="Marsh V.L."/>
            <person name="Martin S.L."/>
            <person name="McConnachie L.J."/>
            <person name="McLay K."/>
            <person name="McMurray A.A."/>
            <person name="Milne S.A."/>
            <person name="Mistry D."/>
            <person name="Moore M.J.F."/>
            <person name="Mullikin J.C."/>
            <person name="Nickerson T."/>
            <person name="Oliver K."/>
            <person name="Parker A."/>
            <person name="Patel R."/>
            <person name="Pearce T.A.V."/>
            <person name="Peck A.I."/>
            <person name="Phillimore B.J.C.T."/>
            <person name="Prathalingam S.R."/>
            <person name="Plumb R.W."/>
            <person name="Ramsay H."/>
            <person name="Rice C.M."/>
            <person name="Ross M.T."/>
            <person name="Scott C.E."/>
            <person name="Sehra H.K."/>
            <person name="Shownkeen R."/>
            <person name="Sims S."/>
            <person name="Skuce C.D."/>
            <person name="Smith M.L."/>
            <person name="Soderlund C."/>
            <person name="Steward C.A."/>
            <person name="Sulston J.E."/>
            <person name="Swann R.M."/>
            <person name="Sycamore N."/>
            <person name="Taylor R."/>
            <person name="Tee L."/>
            <person name="Thomas D.W."/>
            <person name="Thorpe A."/>
            <person name="Tracey A."/>
            <person name="Tromans A.C."/>
            <person name="Vaudin M."/>
            <person name="Wall M."/>
            <person name="Wallis J.M."/>
            <person name="Whitehead S.L."/>
            <person name="Whittaker P."/>
            <person name="Willey D.L."/>
            <person name="Williams L."/>
            <person name="Williams S.A."/>
            <person name="Wilming L."/>
            <person name="Wray P.W."/>
            <person name="Hubbard T."/>
            <person name="Durbin R.M."/>
            <person name="Bentley D.R."/>
            <person name="Beck S."/>
            <person name="Rogers J."/>
        </authorList>
    </citation>
    <scope>NUCLEOTIDE SEQUENCE [LARGE SCALE GENOMIC DNA]</scope>
</reference>
<reference key="3">
    <citation type="journal article" date="2004" name="Genome Res.">
        <title>The status, quality, and expansion of the NIH full-length cDNA project: the Mammalian Gene Collection (MGC).</title>
        <authorList>
            <consortium name="The MGC Project Team"/>
        </authorList>
    </citation>
    <scope>NUCLEOTIDE SEQUENCE [LARGE SCALE MRNA]</scope>
    <source>
        <tissue>Uterus</tissue>
    </source>
</reference>
<reference key="4">
    <citation type="journal article" date="1987" name="J. Cell Biol.">
        <title>Molecular cloning of cDNA for CENP-B, the major human centromere autoantigen.</title>
        <authorList>
            <person name="Earnshaw W.C."/>
            <person name="Sullivan K.F."/>
            <person name="Machlin P.S."/>
            <person name="Cooke C.A."/>
            <person name="Kaiser D.A."/>
            <person name="Pollard T.D."/>
            <person name="Rothfield N.F."/>
            <person name="Cleveland D.W."/>
        </authorList>
    </citation>
    <scope>NUCLEOTIDE SEQUENCE [MRNA] OF 6-599</scope>
</reference>
<reference key="5">
    <citation type="journal article" date="1992" name="J. Cell Biol.">
        <title>A human centromere protein, CENP-B, has a DNA binding domain containing four potential alpha helices at the NH2 terminus, which is separable from dimerizing activity.</title>
        <authorList>
            <person name="Yoda K."/>
            <person name="Kitagawa K."/>
            <person name="Masumoto H."/>
            <person name="Muro Y."/>
            <person name="Okazaki T."/>
        </authorList>
    </citation>
    <scope>SUBUNIT</scope>
    <scope>DOMAINS</scope>
</reference>
<reference key="6">
    <citation type="journal article" date="2008" name="ChemBioChem">
        <title>Assembly of the inner kinetochore proteins CENP-A and CENP-B in living human cells.</title>
        <authorList>
            <person name="Orthaus S."/>
            <person name="Biskup C."/>
            <person name="Hoffmann B."/>
            <person name="Hoischen C."/>
            <person name="Ohndorf S."/>
            <person name="Benndorf K."/>
            <person name="Diekmann S."/>
        </authorList>
    </citation>
    <scope>SUBCELLULAR LOCATION</scope>
</reference>
<reference key="7">
    <citation type="journal article" date="2008" name="J. Biophotonics">
        <title>Live-cell imaging reveals sustained centromere binding of CENP-T via CENP-A and CENP-B.</title>
        <authorList>
            <person name="Hellwig D."/>
            <person name="Muench S."/>
            <person name="Orthaus S."/>
            <person name="Hoischen C."/>
            <person name="Hemmerich P."/>
            <person name="Diekmann S."/>
        </authorList>
    </citation>
    <scope>INTERACTION WITH CENPT</scope>
</reference>
<reference key="8">
    <citation type="journal article" date="2008" name="J. Proteome Res.">
        <title>Combining protein-based IMAC, peptide-based IMAC, and MudPIT for efficient phosphoproteomic analysis.</title>
        <authorList>
            <person name="Cantin G.T."/>
            <person name="Yi W."/>
            <person name="Lu B."/>
            <person name="Park S.K."/>
            <person name="Xu T."/>
            <person name="Lee J.-D."/>
            <person name="Yates J.R. III"/>
        </authorList>
    </citation>
    <scope>PHOSPHORYLATION [LARGE SCALE ANALYSIS] AT SER-156</scope>
    <scope>IDENTIFICATION BY MASS SPECTROMETRY [LARGE SCALE ANALYSIS]</scope>
    <source>
        <tissue>Cervix carcinoma</tissue>
    </source>
</reference>
<reference key="9">
    <citation type="journal article" date="2009" name="Anal. Chem.">
        <title>Lys-N and trypsin cover complementary parts of the phosphoproteome in a refined SCX-based approach.</title>
        <authorList>
            <person name="Gauci S."/>
            <person name="Helbig A.O."/>
            <person name="Slijper M."/>
            <person name="Krijgsveld J."/>
            <person name="Heck A.J."/>
            <person name="Mohammed S."/>
        </authorList>
    </citation>
    <scope>IDENTIFICATION BY MASS SPECTROMETRY [LARGE SCALE ANALYSIS]</scope>
</reference>
<reference key="10">
    <citation type="journal article" date="2010" name="Sci. Signal.">
        <title>Quantitative phosphoproteomics reveals widespread full phosphorylation site occupancy during mitosis.</title>
        <authorList>
            <person name="Olsen J.V."/>
            <person name="Vermeulen M."/>
            <person name="Santamaria A."/>
            <person name="Kumar C."/>
            <person name="Miller M.L."/>
            <person name="Jensen L.J."/>
            <person name="Gnad F."/>
            <person name="Cox J."/>
            <person name="Jensen T.S."/>
            <person name="Nigg E.A."/>
            <person name="Brunak S."/>
            <person name="Mann M."/>
        </authorList>
    </citation>
    <scope>PHOSPHORYLATION [LARGE SCALE ANALYSIS] AT SER-156; SER-165 AND THR-398</scope>
    <scope>IDENTIFICATION BY MASS SPECTROMETRY [LARGE SCALE ANALYSIS]</scope>
    <source>
        <tissue>Cervix carcinoma</tissue>
    </source>
</reference>
<reference key="11">
    <citation type="journal article" date="2013" name="J. Proteome Res.">
        <title>Toward a comprehensive characterization of a human cancer cell phosphoproteome.</title>
        <authorList>
            <person name="Zhou H."/>
            <person name="Di Palma S."/>
            <person name="Preisinger C."/>
            <person name="Peng M."/>
            <person name="Polat A.N."/>
            <person name="Heck A.J."/>
            <person name="Mohammed S."/>
        </authorList>
    </citation>
    <scope>PHOSPHORYLATION [LARGE SCALE ANALYSIS] AT SER-156 AND THR-396</scope>
    <scope>IDENTIFICATION BY MASS SPECTROMETRY [LARGE SCALE ANALYSIS]</scope>
    <source>
        <tissue>Cervix carcinoma</tissue>
        <tissue>Erythroleukemia</tissue>
    </source>
</reference>
<reference key="12">
    <citation type="journal article" date="2013" name="J. Proteome Res.">
        <title>Identification of novel alpha-n-methylation of CENP-B that regulates its binding to the centromeric DNA.</title>
        <authorList>
            <person name="Dai X."/>
            <person name="Otake K."/>
            <person name="You C."/>
            <person name="Cai Q."/>
            <person name="Wang Z."/>
            <person name="Masumoto H."/>
            <person name="Wang Y."/>
        </authorList>
    </citation>
    <scope>CLEAVAGE OF INITIATOR METHIONINE</scope>
    <scope>METHYLATION AT GLY-2</scope>
    <scope>MUTAGENESIS OF LYS-4</scope>
</reference>
<reference key="13">
    <citation type="journal article" date="2014" name="J. Proteomics">
        <title>An enzyme assisted RP-RPLC approach for in-depth analysis of human liver phosphoproteome.</title>
        <authorList>
            <person name="Bian Y."/>
            <person name="Song C."/>
            <person name="Cheng K."/>
            <person name="Dong M."/>
            <person name="Wang F."/>
            <person name="Huang J."/>
            <person name="Sun D."/>
            <person name="Wang L."/>
            <person name="Ye M."/>
            <person name="Zou H."/>
        </authorList>
    </citation>
    <scope>IDENTIFICATION BY MASS SPECTROMETRY [LARGE SCALE ANALYSIS]</scope>
    <source>
        <tissue>Liver</tissue>
    </source>
</reference>
<reference key="14">
    <citation type="journal article" date="2014" name="Open Biol.">
        <title>A CENP-S/X complex assembles at the centromere in S and G2 phases of the human cell cycle.</title>
        <authorList>
            <person name="Dornblut C."/>
            <person name="Quinn N."/>
            <person name="Monajambashi S."/>
            <person name="Prendergast L."/>
            <person name="van Vuuren C."/>
            <person name="Muench S."/>
            <person name="Deng W."/>
            <person name="Leonhardt H."/>
            <person name="Cardoso M.C."/>
            <person name="Hoischen C."/>
            <person name="Diekmann S."/>
            <person name="Sullivan K.F."/>
        </authorList>
    </citation>
    <scope>DEVELOPMENTAL STAGE</scope>
</reference>
<reference key="15">
    <citation type="journal article" date="2016" name="Mol. Cell">
        <title>The flexible ends of CENP-A nucleosome are required for mitotic fidelity.</title>
        <authorList>
            <person name="Roulland Y."/>
            <person name="Ouararhni K."/>
            <person name="Naidenov M."/>
            <person name="Ramos L."/>
            <person name="Shuaib M."/>
            <person name="Syed S.H."/>
            <person name="Lone I.N."/>
            <person name="Boopathi R."/>
            <person name="Fontaine E."/>
            <person name="Papai G."/>
            <person name="Tachiwana H."/>
            <person name="Gautier T."/>
            <person name="Skoufias D."/>
            <person name="Padmanabhan K."/>
            <person name="Bednar J."/>
            <person name="Kurumizaka H."/>
            <person name="Schultz P."/>
            <person name="Angelov D."/>
            <person name="Hamiche A."/>
            <person name="Dimitrov S."/>
        </authorList>
    </citation>
    <scope>SUBUNIT</scope>
</reference>
<reference key="16">
    <citation type="journal article" date="2017" name="Nat. Struct. Mol. Biol.">
        <title>Site-specific mapping of the human SUMO proteome reveals co-modification with phosphorylation.</title>
        <authorList>
            <person name="Hendriks I.A."/>
            <person name="Lyon D."/>
            <person name="Young C."/>
            <person name="Jensen L.J."/>
            <person name="Vertegaal A.C."/>
            <person name="Nielsen M.L."/>
        </authorList>
    </citation>
    <scope>SUMOYLATION [LARGE SCALE ANALYSIS] AT LYS-246</scope>
    <scope>IDENTIFICATION BY MASS SPECTROMETRY [LARGE SCALE ANALYSIS]</scope>
</reference>
<reference key="17">
    <citation type="journal article" date="1998" name="EMBO J.">
        <title>A helix-turn-helix structure unit in human centromere protein B (CENP-B).</title>
        <authorList>
            <person name="Iwahara J."/>
            <person name="Kigawa T."/>
            <person name="Kitagawa K."/>
            <person name="Masumoto H."/>
            <person name="Okazaki T."/>
            <person name="Yokoyama S."/>
        </authorList>
    </citation>
    <scope>STRUCTURE BY NMR OF 1-56</scope>
</reference>
<reference key="18">
    <citation type="journal article" date="2001" name="EMBO J.">
        <title>Crystal structure of the CENP-B protein-DNA complex: the DNA-binding domains of CENP-B induce kinks in the CENP-B box DNA.</title>
        <authorList>
            <person name="Tanaka Y."/>
            <person name="Nureki O."/>
            <person name="Kurumizaka H."/>
            <person name="Fukai S."/>
            <person name="Kawaguchi S."/>
            <person name="Ikuta M."/>
            <person name="Iwahara J."/>
            <person name="Okazaki T."/>
            <person name="Yokoyama S."/>
        </authorList>
    </citation>
    <scope>X-RAY CRYSTALLOGRAPHY (2.5 ANGSTROMS) OF 1-129 IN COMPLEX WITH DNA</scope>
    <scope>H-T-H MOTIF</scope>
    <scope>FUNCTION</scope>
</reference>
<reference key="19">
    <citation type="journal article" date="2003" name="J. Biol. Chem.">
        <title>Crystal structure of the human centromere protein B (CENP-B) dimerization domain at 1.65-A resolution.</title>
        <authorList>
            <person name="Tawaramoto M.S."/>
            <person name="Park S.Y."/>
            <person name="Tanaka Y."/>
            <person name="Nureki O."/>
            <person name="Kurumizaka H."/>
            <person name="Yokoyama S."/>
        </authorList>
    </citation>
    <scope>X-RAY CRYSTALLOGRAPHY (1.65 ANGSTROMS) OF 536-599</scope>
    <scope>SUBUNIT</scope>
</reference>
<accession>P07199</accession>
<accession>Q96EI4</accession>
<keyword id="KW-0002">3D-structure</keyword>
<keyword id="KW-0013">ADP-ribosylation</keyword>
<keyword id="KW-0137">Centromere</keyword>
<keyword id="KW-0158">Chromosome</keyword>
<keyword id="KW-0238">DNA-binding</keyword>
<keyword id="KW-1017">Isopeptide bond</keyword>
<keyword id="KW-0488">Methylation</keyword>
<keyword id="KW-0539">Nucleus</keyword>
<keyword id="KW-0597">Phosphoprotein</keyword>
<keyword id="KW-1267">Proteomics identification</keyword>
<keyword id="KW-1185">Reference proteome</keyword>
<keyword id="KW-0832">Ubl conjugation</keyword>
<sequence length="599" mass="65171">MGPKRRQLTFREKSRIIQEVEENPDLRKGEIARRFNIPPSTLSTILKNKRAILASERKYGVASTCRKTNKLSPYDKLEGLLIAWFQQIRAAGLPVKGIILKEKALRIAEELGMDDFTASNGWLDRFRRRHGVVSCSGVARARARNAAPRTPAAPASPAAVPSEGSGGSTTGWRAREEQPPSVAEGYASQDVFSATETSLWYDFLPDQAAGLCGGDGRPRQATQRLSVLLCANADGSEKLPPLVAGKSAKPRAGQAGLPCDYTANSKGGVTTQALAKYLKALDTRMAAESRRVLLLAGRLAAQSLDTSGLRHVQLAFFPPGTVHPLERGVVQQVKGHYRQAMLLKAMAALEGQDPSGLQLGLTEALHFVAAAWQAVEPSDIAACFREAGFGGGPNATITTSLKSEGEEEEEEEEEEEEEEGEGEEEEEEGEEEEEEGGEGEELGEEEEVEEEGDVDSDEEEEEDEESSSEGLEAEDWAQGVVEAGGSFGAYGAQEEAQCPTLHFLEGGEDSDSDSEEEDDEEEDDEDEDDDDDEEDGDEVPVPSFGEAMAYFAMVKRYLTSFPIDDRVQSHILHLEHDLVHVTRKNHARQAGVRGLGHQS</sequence>
<name>CENPB_HUMAN</name>
<gene>
    <name type="primary">CENPB</name>
</gene>
<comment type="function">
    <text evidence="5 13">Interacts with centromeric heterochromatin in chromosomes and binds to a specific 17 bp subset of alphoid satellite DNA, called the CENP-B box (PubMed:11726497). May organize arrays of centromere satellite DNA into a higher-order structure which then directs centromere formation and kinetochore assembly in mammalian chromosomes (Probable).</text>
</comment>
<comment type="subunit">
    <text evidence="6 7 9 12">Antiparallel homodimer (PubMed:14522975, PubMed:1469042). Interacts with CENPT (PubMed:19412974). Identified in a centromere complex containing histones H2A, H2B and H4, and at least CENPA, CENPB, CENPC, CENPT, CENPN, HJURP, SUPT16H, SSRP1 and RSF1 (PubMed:27499292).</text>
</comment>
<comment type="subcellular location">
    <subcellularLocation>
        <location evidence="2 3 8">Nucleus</location>
    </subcellularLocation>
    <subcellularLocation>
        <location evidence="8">Chromosome</location>
        <location evidence="8">Centromere</location>
    </subcellularLocation>
</comment>
<comment type="developmental stage">
    <text evidence="11">Expression varies across the cell cycle, with high levels in G2 phase (at the mRNA level).</text>
</comment>
<comment type="PTM">
    <text evidence="1">Poly-ADP-ribosylated by PARP1.</text>
</comment>
<comment type="PTM">
    <text evidence="10">N-terminally methylated by METTL11A/NTM1. Alpha-N-methylation is stimulated in response to extracellular stimuli, including increased cell density and heat shock, and seems to facilitate binding to CENP-B boxes. Chromatin-bound CENP-B is primarily trimethylated.</text>
</comment>
<protein>
    <recommendedName>
        <fullName>Major centromere autoantigen B</fullName>
    </recommendedName>
    <alternativeName>
        <fullName>Centromere protein B</fullName>
        <shortName>CENP-B</shortName>
    </alternativeName>
</protein>